<dbReference type="EC" id="3.1.26.-" evidence="1"/>
<dbReference type="EMBL" id="AM180355">
    <property type="protein sequence ID" value="CAJ69479.1"/>
    <property type="molecule type" value="Genomic_DNA"/>
</dbReference>
<dbReference type="RefSeq" id="WP_003416240.1">
    <property type="nucleotide sequence ID" value="NZ_JAUPES010000012.1"/>
</dbReference>
<dbReference type="RefSeq" id="YP_001089106.1">
    <property type="nucleotide sequence ID" value="NC_009089.1"/>
</dbReference>
<dbReference type="SMR" id="Q182S9"/>
<dbReference type="STRING" id="272563.CD630_25890"/>
<dbReference type="EnsemblBacteria" id="CAJ69479">
    <property type="protein sequence ID" value="CAJ69479"/>
    <property type="gene ID" value="CD630_25890"/>
</dbReference>
<dbReference type="KEGG" id="cdf:CD630_25890"/>
<dbReference type="KEGG" id="pdc:CDIF630_02843"/>
<dbReference type="PATRIC" id="fig|272563.120.peg.2731"/>
<dbReference type="eggNOG" id="COG1561">
    <property type="taxonomic scope" value="Bacteria"/>
</dbReference>
<dbReference type="OrthoDB" id="9771229at2"/>
<dbReference type="PhylomeDB" id="Q182S9"/>
<dbReference type="BioCyc" id="PDIF272563:G12WB-2746-MONOMER"/>
<dbReference type="Proteomes" id="UP000001978">
    <property type="component" value="Chromosome"/>
</dbReference>
<dbReference type="GO" id="GO:0004521">
    <property type="term" value="F:RNA endonuclease activity"/>
    <property type="evidence" value="ECO:0007669"/>
    <property type="project" value="InterPro"/>
</dbReference>
<dbReference type="GO" id="GO:0030435">
    <property type="term" value="P:sporulation resulting in formation of a cellular spore"/>
    <property type="evidence" value="ECO:0007669"/>
    <property type="project" value="UniProtKB-KW"/>
</dbReference>
<dbReference type="InterPro" id="IPR013551">
    <property type="entry name" value="YicC-like_C"/>
</dbReference>
<dbReference type="InterPro" id="IPR013527">
    <property type="entry name" value="YicC-like_N"/>
</dbReference>
<dbReference type="InterPro" id="IPR005229">
    <property type="entry name" value="YicC/YloC-like"/>
</dbReference>
<dbReference type="NCBIfam" id="TIGR00255">
    <property type="entry name" value="YicC/YloC family endoribonuclease"/>
    <property type="match status" value="1"/>
</dbReference>
<dbReference type="PANTHER" id="PTHR30636">
    <property type="entry name" value="UPF0701 PROTEIN YICC"/>
    <property type="match status" value="1"/>
</dbReference>
<dbReference type="PANTHER" id="PTHR30636:SF3">
    <property type="entry name" value="UPF0701 PROTEIN YICC"/>
    <property type="match status" value="1"/>
</dbReference>
<dbReference type="Pfam" id="PF08340">
    <property type="entry name" value="YicC-like_C"/>
    <property type="match status" value="1"/>
</dbReference>
<dbReference type="Pfam" id="PF03755">
    <property type="entry name" value="YicC-like_N"/>
    <property type="match status" value="1"/>
</dbReference>
<sequence>MAISMTGFGRGEYKDDNYYFLVECKTINHKYSDINIRLPRKISFLEDKVRNLVKNYVKRGRVDLYIKFDLLGKEDVNLNFDEGLASQYIDILKEIKNKFDIIDDISVMNVAKFPDIVKIEEKEEDEDLLWSMLNQAVEDALIKLREMRSEEGKKLAEDIAMRCDLLKNHIEEIEKYSSSVVEDYREKLNLRISELLDDPSIIDENRLAQEVAIYADKSSITEEIVRFKSHIGQLKNTIFKDDSIGRKIDFLIQEMNRETNTIGSKSSDINITNLVVEVKSELEKIREQIQNIE</sequence>
<feature type="chain" id="PRO_0000458468" description="Probable endoribonuclease YicC">
    <location>
        <begin position="1"/>
        <end position="293"/>
    </location>
</feature>
<keyword id="KW-0255">Endonuclease</keyword>
<keyword id="KW-0378">Hydrolase</keyword>
<keyword id="KW-0540">Nuclease</keyword>
<keyword id="KW-1185">Reference proteome</keyword>
<keyword id="KW-0749">Sporulation</keyword>
<organism>
    <name type="scientific">Clostridioides difficile (strain 630)</name>
    <name type="common">Peptoclostridium difficile</name>
    <dbReference type="NCBI Taxonomy" id="272563"/>
    <lineage>
        <taxon>Bacteria</taxon>
        <taxon>Bacillati</taxon>
        <taxon>Bacillota</taxon>
        <taxon>Clostridia</taxon>
        <taxon>Peptostreptococcales</taxon>
        <taxon>Peptostreptococcaceae</taxon>
        <taxon>Clostridioides</taxon>
    </lineage>
</organism>
<comment type="function">
    <text evidence="3 6">Negatively modulates sporulation, probably in response to nutrient conditions (PubMed:33846410). Effects expression of sporulation regulator spo0A in an indirect manner, possibly via repression of the sinRR' operon (Probable) (PubMed:33846410).</text>
</comment>
<comment type="function">
    <text evidence="1">Probably a ssRNA endonuclease.</text>
</comment>
<comment type="function">
    <text evidence="2">Might contribute to small RNA (sRNA) regulation.</text>
</comment>
<comment type="cofactor">
    <cofactor evidence="1">
        <name>a divalent metal cation</name>
        <dbReference type="ChEBI" id="CHEBI:60240"/>
    </cofactor>
</comment>
<comment type="induction">
    <text evidence="3">Accumulates by 6 hours of growth, expressed for at least 12 hours in sporulation medium (SM) (at protein level). Accumulates independently of Spo0A sporulation response regulator (CD630_12140, Stage 0 sporulation protein A).</text>
</comment>
<comment type="disruption phenotype">
    <text evidence="3">No visible change in biofilm formation (in BHI-S medium), TcdA toxin production (in TY medium) or growth in sporulation medium (SM); increased sporulation in SM but not 70:30 medium. In SM medium, sporulation initiates earlier than in wild-type cells. Higher levels of spo0A transcript and of Spo0A accumulate. Increased transcription of 165 genes (most are in the spo0A regulon), decreased expression of 21 genes. 5-fold increase in expression of the sinRR' operon (CD630_22150-CD630_22140). No change in pathogenicity in Syrian golden hamsters.</text>
</comment>
<comment type="similarity">
    <text evidence="5">Belongs to the YicC/YloC family.</text>
</comment>
<evidence type="ECO:0000250" key="1">
    <source>
        <dbReference type="UniProtKB" id="O34441"/>
    </source>
</evidence>
<evidence type="ECO:0000250" key="2">
    <source>
        <dbReference type="UniProtKB" id="P23839"/>
    </source>
</evidence>
<evidence type="ECO:0000269" key="3">
    <source>
    </source>
</evidence>
<evidence type="ECO:0000303" key="4">
    <source>
    </source>
</evidence>
<evidence type="ECO:0000305" key="5"/>
<evidence type="ECO:0000305" key="6">
    <source>
    </source>
</evidence>
<evidence type="ECO:0000312" key="7">
    <source>
        <dbReference type="EMBL" id="CAJ69479.1"/>
    </source>
</evidence>
<reference evidence="7" key="1">
    <citation type="journal article" date="2006" name="Nat. Genet.">
        <title>The multidrug-resistant human pathogen Clostridium difficile has a highly mobile, mosaic genome.</title>
        <authorList>
            <person name="Sebaihia M."/>
            <person name="Wren B.W."/>
            <person name="Mullany P."/>
            <person name="Fairweather N.F."/>
            <person name="Minton N."/>
            <person name="Stabler R."/>
            <person name="Thomson N.R."/>
            <person name="Roberts A.P."/>
            <person name="Cerdeno-Tarraga A.M."/>
            <person name="Wang H."/>
            <person name="Holden M.T.G."/>
            <person name="Wright A."/>
            <person name="Churcher C."/>
            <person name="Quail M.A."/>
            <person name="Baker S."/>
            <person name="Bason N."/>
            <person name="Brooks K."/>
            <person name="Chillingworth T."/>
            <person name="Cronin A."/>
            <person name="Davis P."/>
            <person name="Dowd L."/>
            <person name="Fraser A."/>
            <person name="Feltwell T."/>
            <person name="Hance Z."/>
            <person name="Holroyd S."/>
            <person name="Jagels K."/>
            <person name="Moule S."/>
            <person name="Mungall K."/>
            <person name="Price C."/>
            <person name="Rabbinowitsch E."/>
            <person name="Sharp S."/>
            <person name="Simmonds M."/>
            <person name="Stevens K."/>
            <person name="Unwin L."/>
            <person name="Whithead S."/>
            <person name="Dupuy B."/>
            <person name="Dougan G."/>
            <person name="Barrell B."/>
            <person name="Parkhill J."/>
        </authorList>
    </citation>
    <scope>NUCLEOTIDE SEQUENCE [LARGE SCALE GENOMIC DNA]</scope>
    <source>
        <strain>630</strain>
    </source>
</reference>
<reference key="2">
    <citation type="journal article" date="2021" name="Sci. Rep.">
        <title>CD25890, a conserved protein that modulates sporulation initiation in Clostridioides difficile.</title>
        <authorList>
            <person name="Martins D."/>
            <person name="DiCandia M.A."/>
            <person name="Mendes A.L."/>
            <person name="Wetzel D."/>
            <person name="McBride S.M."/>
            <person name="Henriques A.O."/>
            <person name="Serrano M."/>
        </authorList>
    </citation>
    <scope>FUNCTION</scope>
    <scope>INDUCTION</scope>
    <scope>DISRUPTION PHENOTYPE</scope>
    <source>
        <strain>630</strain>
    </source>
</reference>
<name>YICC_CLOD6</name>
<accession>Q182S9</accession>
<gene>
    <name evidence="7" type="ordered locus">CD630_25890</name>
</gene>
<protein>
    <recommendedName>
        <fullName evidence="2">Probable endoribonuclease YicC</fullName>
        <ecNumber evidence="1">3.1.26.-</ecNumber>
    </recommendedName>
    <alternativeName>
        <fullName evidence="4">CD25890</fullName>
    </alternativeName>
</protein>
<proteinExistence type="evidence at protein level"/>